<keyword id="KW-0001">2Fe-2S</keyword>
<keyword id="KW-0997">Cell inner membrane</keyword>
<keyword id="KW-1003">Cell membrane</keyword>
<keyword id="KW-0274">FAD</keyword>
<keyword id="KW-0285">Flavoprotein</keyword>
<keyword id="KW-0406">Ion transport</keyword>
<keyword id="KW-0408">Iron</keyword>
<keyword id="KW-0411">Iron-sulfur</keyword>
<keyword id="KW-0472">Membrane</keyword>
<keyword id="KW-0479">Metal-binding</keyword>
<keyword id="KW-0520">NAD</keyword>
<keyword id="KW-0915">Sodium</keyword>
<keyword id="KW-0739">Sodium transport</keyword>
<keyword id="KW-1278">Translocase</keyword>
<keyword id="KW-0813">Transport</keyword>
<keyword id="KW-0830">Ubiquinone</keyword>
<feature type="chain" id="PRO_0000074487" description="Na(+)-translocating NADH-quinone reductase subunit F">
    <location>
        <begin position="1" status="less than"/>
        <end position="303" status="greater than"/>
    </location>
</feature>
<feature type="domain" description="2Fe-2S ferredoxin-type" evidence="3">
    <location>
        <begin position="1" status="less than"/>
        <end position="55"/>
    </location>
</feature>
<feature type="domain" description="FAD-binding FR-type" evidence="4">
    <location>
        <begin position="58"/>
        <end position="198"/>
    </location>
</feature>
<feature type="region of interest" description="Catalytic">
    <location>
        <begin position="201"/>
        <end position="303" status="greater than"/>
    </location>
</feature>
<feature type="binding site" evidence="3">
    <location>
        <position position="4"/>
    </location>
    <ligand>
        <name>[2Fe-2S] cluster</name>
        <dbReference type="ChEBI" id="CHEBI:190135"/>
    </ligand>
</feature>
<feature type="binding site" evidence="3">
    <location>
        <position position="7"/>
    </location>
    <ligand>
        <name>[2Fe-2S] cluster</name>
        <dbReference type="ChEBI" id="CHEBI:190135"/>
    </ligand>
</feature>
<feature type="binding site" evidence="3">
    <location>
        <position position="39"/>
    </location>
    <ligand>
        <name>[2Fe-2S] cluster</name>
        <dbReference type="ChEBI" id="CHEBI:190135"/>
    </ligand>
</feature>
<feature type="non-terminal residue">
    <location>
        <position position="1"/>
    </location>
</feature>
<feature type="non-terminal residue">
    <location>
        <position position="303"/>
    </location>
</feature>
<proteinExistence type="inferred from homology"/>
<evidence type="ECO:0000250" key="1">
    <source>
        <dbReference type="UniProtKB" id="A5F5Y4"/>
    </source>
</evidence>
<evidence type="ECO:0000250" key="2">
    <source>
        <dbReference type="UniProtKB" id="Q56584"/>
    </source>
</evidence>
<evidence type="ECO:0000255" key="3">
    <source>
        <dbReference type="PROSITE-ProRule" id="PRU00465"/>
    </source>
</evidence>
<evidence type="ECO:0000255" key="4">
    <source>
        <dbReference type="PROSITE-ProRule" id="PRU00716"/>
    </source>
</evidence>
<evidence type="ECO:0000305" key="5"/>
<organism>
    <name type="scientific">Pseudoalteromonas haloplanktis</name>
    <name type="common">Alteromonas haloplanktis</name>
    <dbReference type="NCBI Taxonomy" id="228"/>
    <lineage>
        <taxon>Bacteria</taxon>
        <taxon>Pseudomonadati</taxon>
        <taxon>Pseudomonadota</taxon>
        <taxon>Gammaproteobacteria</taxon>
        <taxon>Alteromonadales</taxon>
        <taxon>Pseudoalteromonadaceae</taxon>
        <taxon>Pseudoalteromonas</taxon>
    </lineage>
</organism>
<dbReference type="EC" id="7.2.1.1" evidence="2"/>
<dbReference type="EMBL" id="AB024720">
    <property type="protein sequence ID" value="BAA83757.1"/>
    <property type="molecule type" value="Genomic_DNA"/>
</dbReference>
<dbReference type="SMR" id="Q9LCJ4"/>
<dbReference type="eggNOG" id="COG2871">
    <property type="taxonomic scope" value="Bacteria"/>
</dbReference>
<dbReference type="GO" id="GO:0005886">
    <property type="term" value="C:plasma membrane"/>
    <property type="evidence" value="ECO:0007669"/>
    <property type="project" value="UniProtKB-SubCell"/>
</dbReference>
<dbReference type="GO" id="GO:0051537">
    <property type="term" value="F:2 iron, 2 sulfur cluster binding"/>
    <property type="evidence" value="ECO:0007669"/>
    <property type="project" value="UniProtKB-KW"/>
</dbReference>
<dbReference type="GO" id="GO:0046872">
    <property type="term" value="F:metal ion binding"/>
    <property type="evidence" value="ECO:0007669"/>
    <property type="project" value="UniProtKB-KW"/>
</dbReference>
<dbReference type="GO" id="GO:0016655">
    <property type="term" value="F:oxidoreductase activity, acting on NAD(P)H, quinone or similar compound as acceptor"/>
    <property type="evidence" value="ECO:0007669"/>
    <property type="project" value="InterPro"/>
</dbReference>
<dbReference type="GO" id="GO:0006814">
    <property type="term" value="P:sodium ion transport"/>
    <property type="evidence" value="ECO:0007669"/>
    <property type="project" value="UniProtKB-KW"/>
</dbReference>
<dbReference type="CDD" id="cd00207">
    <property type="entry name" value="fer2"/>
    <property type="match status" value="1"/>
</dbReference>
<dbReference type="CDD" id="cd06188">
    <property type="entry name" value="NADH_quinone_reductase"/>
    <property type="match status" value="1"/>
</dbReference>
<dbReference type="FunFam" id="2.40.30.10:FF:000064">
    <property type="entry name" value="Na(+)-translocating NADH-quinone reductase subunit F"/>
    <property type="match status" value="1"/>
</dbReference>
<dbReference type="FunFam" id="3.40.50.80:FF:000014">
    <property type="entry name" value="Na(+)-translocating NADH-quinone reductase subunit F"/>
    <property type="match status" value="1"/>
</dbReference>
<dbReference type="Gene3D" id="3.10.20.30">
    <property type="match status" value="1"/>
</dbReference>
<dbReference type="Gene3D" id="3.40.50.80">
    <property type="entry name" value="Nucleotide-binding domain of ferredoxin-NADP reductase (FNR) module"/>
    <property type="match status" value="1"/>
</dbReference>
<dbReference type="Gene3D" id="2.40.30.10">
    <property type="entry name" value="Translation factors"/>
    <property type="match status" value="1"/>
</dbReference>
<dbReference type="InterPro" id="IPR036010">
    <property type="entry name" value="2Fe-2S_ferredoxin-like_sf"/>
</dbReference>
<dbReference type="InterPro" id="IPR001041">
    <property type="entry name" value="2Fe-2S_ferredoxin-type"/>
</dbReference>
<dbReference type="InterPro" id="IPR012675">
    <property type="entry name" value="Beta-grasp_dom_sf"/>
</dbReference>
<dbReference type="InterPro" id="IPR008333">
    <property type="entry name" value="Cbr1-like_FAD-bd_dom"/>
</dbReference>
<dbReference type="InterPro" id="IPR017927">
    <property type="entry name" value="FAD-bd_FR_type"/>
</dbReference>
<dbReference type="InterPro" id="IPR039261">
    <property type="entry name" value="FNR_nucleotide-bd"/>
</dbReference>
<dbReference type="InterPro" id="IPR010205">
    <property type="entry name" value="NqrF"/>
</dbReference>
<dbReference type="InterPro" id="IPR001433">
    <property type="entry name" value="OxRdtase_FAD/NAD-bd"/>
</dbReference>
<dbReference type="InterPro" id="IPR017938">
    <property type="entry name" value="Riboflavin_synthase-like_b-brl"/>
</dbReference>
<dbReference type="NCBIfam" id="TIGR01941">
    <property type="entry name" value="nqrF"/>
    <property type="match status" value="1"/>
</dbReference>
<dbReference type="PANTHER" id="PTHR43644">
    <property type="entry name" value="NA(+)-TRANSLOCATING NADH-QUINONE REDUCTASE SUBUNIT"/>
    <property type="match status" value="1"/>
</dbReference>
<dbReference type="PANTHER" id="PTHR43644:SF1">
    <property type="entry name" value="NAD(P)H-FLAVIN REDUCTASE"/>
    <property type="match status" value="1"/>
</dbReference>
<dbReference type="Pfam" id="PF00970">
    <property type="entry name" value="FAD_binding_6"/>
    <property type="match status" value="1"/>
</dbReference>
<dbReference type="Pfam" id="PF00175">
    <property type="entry name" value="NAD_binding_1"/>
    <property type="match status" value="1"/>
</dbReference>
<dbReference type="SUPFAM" id="SSF54292">
    <property type="entry name" value="2Fe-2S ferredoxin-like"/>
    <property type="match status" value="1"/>
</dbReference>
<dbReference type="SUPFAM" id="SSF52343">
    <property type="entry name" value="Ferredoxin reductase-like, C-terminal NADP-linked domain"/>
    <property type="match status" value="1"/>
</dbReference>
<dbReference type="SUPFAM" id="SSF63380">
    <property type="entry name" value="Riboflavin synthase domain-like"/>
    <property type="match status" value="1"/>
</dbReference>
<dbReference type="PROSITE" id="PS51085">
    <property type="entry name" value="2FE2S_FER_2"/>
    <property type="match status" value="1"/>
</dbReference>
<dbReference type="PROSITE" id="PS51384">
    <property type="entry name" value="FAD_FR"/>
    <property type="match status" value="1"/>
</dbReference>
<reference key="1">
    <citation type="journal article" date="2000" name="Can. J. Microbiol.">
        <title>Detection of the Na(+)-translocating NADH-quinone reductase in marine bacteria using a PCR technique.</title>
        <authorList>
            <person name="Kato S."/>
            <person name="Yumoto I."/>
        </authorList>
    </citation>
    <scope>NUCLEOTIDE SEQUENCE [GENOMIC DNA]</scope>
</reference>
<gene>
    <name type="primary">nqrF</name>
    <name type="synonym">nqr6</name>
</gene>
<sequence>GGSCGQCRVHIKEGGGDILPTELDHISKGEAREGCRLACQVNVKNDMEIELEESIFGVKKWDCEVISNDNKATFIKELKLQIPDGESVPFRAGGYIQIEAPAHHVKYADFDIPEEYRGDWNHFGFFDLESKVDEETIRAYSMANYPEEEGIIMLNVRIATPPPRNLSLPCGKMSSYIWSLKEGDKVTISGPFGEFFAKDTDAEMVFVGGGAGMAPMRSHIFDQLKRLNSKRKISFWYGARSKREMFYVEDFDGLAEQNENFVWHTALSDPQPEDNWEGYTGFIHNVLFENYLKDHEAPEDCEY</sequence>
<protein>
    <recommendedName>
        <fullName>Na(+)-translocating NADH-quinone reductase subunit F</fullName>
        <shortName>Na(+)-NQR subunit F</shortName>
        <shortName>Na(+)-translocating NQR subunit F</shortName>
        <ecNumber evidence="2">7.2.1.1</ecNumber>
    </recommendedName>
    <alternativeName>
        <fullName>NQR complex subunit F</fullName>
    </alternativeName>
    <alternativeName>
        <fullName>NQR-1 subunit F</fullName>
    </alternativeName>
</protein>
<comment type="function">
    <text evidence="2">NQR complex catalyzes the reduction of ubiquinone-1 to ubiquinol by two successive reactions, coupled with the transport of Na(+) ions from the cytoplasm to the periplasm. The first step is catalyzed by NqrF, which accepts electrons from NADH and reduces ubiquinone-1 to ubisemiquinone by a one-electron transfer pathway.</text>
</comment>
<comment type="catalytic activity">
    <reaction evidence="2">
        <text>a ubiquinone + n Na(+)(in) + NADH + H(+) = a ubiquinol + n Na(+)(out) + NAD(+)</text>
        <dbReference type="Rhea" id="RHEA:47748"/>
        <dbReference type="Rhea" id="RHEA-COMP:9565"/>
        <dbReference type="Rhea" id="RHEA-COMP:9566"/>
        <dbReference type="ChEBI" id="CHEBI:15378"/>
        <dbReference type="ChEBI" id="CHEBI:16389"/>
        <dbReference type="ChEBI" id="CHEBI:17976"/>
        <dbReference type="ChEBI" id="CHEBI:29101"/>
        <dbReference type="ChEBI" id="CHEBI:57540"/>
        <dbReference type="ChEBI" id="CHEBI:57945"/>
        <dbReference type="EC" id="7.2.1.1"/>
    </reaction>
</comment>
<comment type="cofactor">
    <cofactor evidence="1">
        <name>[2Fe-2S] cluster</name>
        <dbReference type="ChEBI" id="CHEBI:190135"/>
    </cofactor>
    <text evidence="1">Binds 1 [2Fe-2S] cluster.</text>
</comment>
<comment type="cofactor">
    <cofactor evidence="1">
        <name>FAD</name>
        <dbReference type="ChEBI" id="CHEBI:57692"/>
    </cofactor>
</comment>
<comment type="subunit">
    <text evidence="2">Composed of six subunits; NqrA, NqrB, NqrC, NqrD, NqrE and NqrF.</text>
</comment>
<comment type="subcellular location">
    <subcellularLocation>
        <location evidence="5">Cell inner membrane</location>
    </subcellularLocation>
</comment>
<comment type="similarity">
    <text evidence="5">Belongs to the NqrF family.</text>
</comment>
<accession>Q9LCJ4</accession>
<name>NQRF_PSEHA</name>